<dbReference type="EMBL" id="CP000958">
    <property type="protein sequence ID" value="ACA89529.1"/>
    <property type="molecule type" value="Genomic_DNA"/>
</dbReference>
<dbReference type="RefSeq" id="WP_004199844.1">
    <property type="nucleotide sequence ID" value="NC_010508.1"/>
</dbReference>
<dbReference type="SMR" id="B1JU44"/>
<dbReference type="GeneID" id="98107138"/>
<dbReference type="KEGG" id="bcm:Bcenmc03_0349"/>
<dbReference type="HOGENOM" id="CLU_135723_6_2_4"/>
<dbReference type="Proteomes" id="UP000002169">
    <property type="component" value="Chromosome 1"/>
</dbReference>
<dbReference type="GO" id="GO:0005737">
    <property type="term" value="C:cytoplasm"/>
    <property type="evidence" value="ECO:0007669"/>
    <property type="project" value="UniProtKB-ARBA"/>
</dbReference>
<dbReference type="GO" id="GO:1990904">
    <property type="term" value="C:ribonucleoprotein complex"/>
    <property type="evidence" value="ECO:0007669"/>
    <property type="project" value="UniProtKB-KW"/>
</dbReference>
<dbReference type="GO" id="GO:0005840">
    <property type="term" value="C:ribosome"/>
    <property type="evidence" value="ECO:0007669"/>
    <property type="project" value="UniProtKB-KW"/>
</dbReference>
<dbReference type="GO" id="GO:0003735">
    <property type="term" value="F:structural constituent of ribosome"/>
    <property type="evidence" value="ECO:0007669"/>
    <property type="project" value="InterPro"/>
</dbReference>
<dbReference type="GO" id="GO:0006412">
    <property type="term" value="P:translation"/>
    <property type="evidence" value="ECO:0007669"/>
    <property type="project" value="UniProtKB-UniRule"/>
</dbReference>
<dbReference type="HAMAP" id="MF_00251">
    <property type="entry name" value="Ribosomal_bL36"/>
    <property type="match status" value="1"/>
</dbReference>
<dbReference type="InterPro" id="IPR000473">
    <property type="entry name" value="Ribosomal_bL36"/>
</dbReference>
<dbReference type="InterPro" id="IPR035977">
    <property type="entry name" value="Ribosomal_bL36_sp"/>
</dbReference>
<dbReference type="NCBIfam" id="TIGR01022">
    <property type="entry name" value="rpmJ_bact"/>
    <property type="match status" value="1"/>
</dbReference>
<dbReference type="PANTHER" id="PTHR42888">
    <property type="entry name" value="50S RIBOSOMAL PROTEIN L36, CHLOROPLASTIC"/>
    <property type="match status" value="1"/>
</dbReference>
<dbReference type="PANTHER" id="PTHR42888:SF1">
    <property type="entry name" value="LARGE RIBOSOMAL SUBUNIT PROTEIN BL36C"/>
    <property type="match status" value="1"/>
</dbReference>
<dbReference type="Pfam" id="PF00444">
    <property type="entry name" value="Ribosomal_L36"/>
    <property type="match status" value="1"/>
</dbReference>
<dbReference type="SUPFAM" id="SSF57840">
    <property type="entry name" value="Ribosomal protein L36"/>
    <property type="match status" value="1"/>
</dbReference>
<dbReference type="PROSITE" id="PS00828">
    <property type="entry name" value="RIBOSOMAL_L36"/>
    <property type="match status" value="1"/>
</dbReference>
<proteinExistence type="inferred from homology"/>
<gene>
    <name evidence="1" type="primary">rpmJ</name>
    <name type="ordered locus">Bcenmc03_0349</name>
</gene>
<accession>B1JU44</accession>
<comment type="similarity">
    <text evidence="1">Belongs to the bacterial ribosomal protein bL36 family.</text>
</comment>
<sequence length="38" mass="4410">MKVMASVKRICRNCKIIKRKGVVRVICSSDPRHKQRQG</sequence>
<reference key="1">
    <citation type="submission" date="2008-02" db="EMBL/GenBank/DDBJ databases">
        <title>Complete sequence of chromosome 1 of Burkholderia cenocepacia MC0-3.</title>
        <authorList>
            <person name="Copeland A."/>
            <person name="Lucas S."/>
            <person name="Lapidus A."/>
            <person name="Barry K."/>
            <person name="Bruce D."/>
            <person name="Goodwin L."/>
            <person name="Glavina del Rio T."/>
            <person name="Dalin E."/>
            <person name="Tice H."/>
            <person name="Pitluck S."/>
            <person name="Chain P."/>
            <person name="Malfatti S."/>
            <person name="Shin M."/>
            <person name="Vergez L."/>
            <person name="Schmutz J."/>
            <person name="Larimer F."/>
            <person name="Land M."/>
            <person name="Hauser L."/>
            <person name="Kyrpides N."/>
            <person name="Mikhailova N."/>
            <person name="Tiedje J."/>
            <person name="Richardson P."/>
        </authorList>
    </citation>
    <scope>NUCLEOTIDE SEQUENCE [LARGE SCALE GENOMIC DNA]</scope>
    <source>
        <strain>MC0-3</strain>
    </source>
</reference>
<name>RL36_BURO0</name>
<feature type="chain" id="PRO_1000101008" description="Large ribosomal subunit protein bL36">
    <location>
        <begin position="1"/>
        <end position="38"/>
    </location>
</feature>
<organism>
    <name type="scientific">Burkholderia orbicola (strain MC0-3)</name>
    <dbReference type="NCBI Taxonomy" id="406425"/>
    <lineage>
        <taxon>Bacteria</taxon>
        <taxon>Pseudomonadati</taxon>
        <taxon>Pseudomonadota</taxon>
        <taxon>Betaproteobacteria</taxon>
        <taxon>Burkholderiales</taxon>
        <taxon>Burkholderiaceae</taxon>
        <taxon>Burkholderia</taxon>
        <taxon>Burkholderia cepacia complex</taxon>
        <taxon>Burkholderia orbicola</taxon>
    </lineage>
</organism>
<keyword id="KW-0687">Ribonucleoprotein</keyword>
<keyword id="KW-0689">Ribosomal protein</keyword>
<evidence type="ECO:0000255" key="1">
    <source>
        <dbReference type="HAMAP-Rule" id="MF_00251"/>
    </source>
</evidence>
<evidence type="ECO:0000305" key="2"/>
<protein>
    <recommendedName>
        <fullName evidence="1">Large ribosomal subunit protein bL36</fullName>
    </recommendedName>
    <alternativeName>
        <fullName evidence="2">50S ribosomal protein L36</fullName>
    </alternativeName>
</protein>